<proteinExistence type="inferred from homology"/>
<gene>
    <name type="primary">relA</name>
    <name type="ordered locus">ML0491</name>
    <name type="ORF">B1177_C1_168</name>
    <name type="ORF">MLCB1259.09</name>
</gene>
<name>RELA_MYCLE</name>
<evidence type="ECO:0000250" key="1"/>
<evidence type="ECO:0000255" key="2">
    <source>
        <dbReference type="PROSITE-ProRule" id="PRU01007"/>
    </source>
</evidence>
<evidence type="ECO:0000255" key="3">
    <source>
        <dbReference type="PROSITE-ProRule" id="PRU01175"/>
    </source>
</evidence>
<evidence type="ECO:0000255" key="4">
    <source>
        <dbReference type="PROSITE-ProRule" id="PRU01228"/>
    </source>
</evidence>
<evidence type="ECO:0000256" key="5">
    <source>
        <dbReference type="SAM" id="MobiDB-lite"/>
    </source>
</evidence>
<evidence type="ECO:0000305" key="6"/>
<comment type="function">
    <text evidence="1">In eubacteria ppGpp (guanosine 3'-diphosphate 5'-diphosphate) is a mediator of the stringent response that coordinates a variety of cellular activities in response to changes in nutritional abundance. This enzyme catalyzes the formation of pppGpp which is then hydrolyzed to form ppGpp (By similarity).</text>
</comment>
<comment type="catalytic activity">
    <reaction>
        <text>GTP + ATP = guanosine 3'-diphosphate 5'-triphosphate + AMP</text>
        <dbReference type="Rhea" id="RHEA:22088"/>
        <dbReference type="ChEBI" id="CHEBI:30616"/>
        <dbReference type="ChEBI" id="CHEBI:37565"/>
        <dbReference type="ChEBI" id="CHEBI:142410"/>
        <dbReference type="ChEBI" id="CHEBI:456215"/>
        <dbReference type="EC" id="2.7.6.5"/>
    </reaction>
</comment>
<comment type="pathway">
    <text>Purine metabolism; ppGpp biosynthesis; ppGpp from GTP: step 1/2.</text>
</comment>
<comment type="similarity">
    <text evidence="6">Belongs to the RelA/SpoT family.</text>
</comment>
<sequence length="787" mass="87266">MADDQGTAQALQPVQVVPGPAVEAPETPVETLKTSSSASRRVRARLARRMTAQRSTISPVLEPLVAVHKEFYPKANLSIVQRAFEVADQRHASQLRRSGDPYITHPLAVANILAELGMDITTLVAALLHDTVEDTGYTLEALSEEFGDEVGHLVDGVTKLDRVVLGSAAEGETIRKMITAMARDPRVLVIKVADRLHNMRTMRFLPPEKQARKARETLEVIAPLAHRLGMASVKWELEDLSFAILHPKKYEEIVRLVAGRAPSRDTYLAKVRAEIISTLGASKIKATVEGRPKHYWSIYQKMIVKGRDFDDIHDLVGIRILCDEIRDCYAAVGVVHSLWQPMAGRFKDYIAQPRYGVYQSLHTTVVGPEGKPLEVQIRTRDMHRTAEYGIAAHWRYKEAKGRNGVLHPHAAAEIDDMAWMRQLLDWQREAAEPGEFLESLRYDLAVQEIFVFTPKGDVITLPTGSTPVDFAYAVHTEVGHRCIGARVNGRLVALERKLENGEFVEIFTSKAPNAGPSRDWQQFVVSPRAKTKIRQWFAKERREEALEAGKDAMAREVRRGGLPLQRLVNGESMAAVARELHYIDVSALYTAIGEGHVSARHVVQRLLAELGGIDQAEEELAERSTPTTMLRRQRSTDDVGVSVPGAPGVLTKLAKCCTPVPGDAIMGFVTRGGGVSVHRTDCTNTASLQQQAERIIEVLWAPSSSSVFLVAIQVEALDRHRLLLDITRALADERVDILSASVTTSGDRVAISRFTFEMGDPKHLGHLLNVVRNVEGVYDVYRVMSAS</sequence>
<reference key="1">
    <citation type="submission" date="1994-01" db="EMBL/GenBank/DDBJ databases">
        <authorList>
            <person name="Smith D.R."/>
            <person name="Robison K."/>
        </authorList>
    </citation>
    <scope>NUCLEOTIDE SEQUENCE [GENOMIC DNA]</scope>
</reference>
<reference key="2">
    <citation type="journal article" date="2001" name="Nature">
        <title>Massive gene decay in the leprosy bacillus.</title>
        <authorList>
            <person name="Cole S.T."/>
            <person name="Eiglmeier K."/>
            <person name="Parkhill J."/>
            <person name="James K.D."/>
            <person name="Thomson N.R."/>
            <person name="Wheeler P.R."/>
            <person name="Honore N."/>
            <person name="Garnier T."/>
            <person name="Churcher C.M."/>
            <person name="Harris D.E."/>
            <person name="Mungall K.L."/>
            <person name="Basham D."/>
            <person name="Brown D."/>
            <person name="Chillingworth T."/>
            <person name="Connor R."/>
            <person name="Davies R.M."/>
            <person name="Devlin K."/>
            <person name="Duthoy S."/>
            <person name="Feltwell T."/>
            <person name="Fraser A."/>
            <person name="Hamlin N."/>
            <person name="Holroyd S."/>
            <person name="Hornsby T."/>
            <person name="Jagels K."/>
            <person name="Lacroix C."/>
            <person name="Maclean J."/>
            <person name="Moule S."/>
            <person name="Murphy L.D."/>
            <person name="Oliver K."/>
            <person name="Quail M.A."/>
            <person name="Rajandream M.A."/>
            <person name="Rutherford K.M."/>
            <person name="Rutter S."/>
            <person name="Seeger K."/>
            <person name="Simon S."/>
            <person name="Simmonds M."/>
            <person name="Skelton J."/>
            <person name="Squares R."/>
            <person name="Squares S."/>
            <person name="Stevens K."/>
            <person name="Taylor K."/>
            <person name="Whitehead S."/>
            <person name="Woodward J.R."/>
            <person name="Barrell B.G."/>
        </authorList>
    </citation>
    <scope>NUCLEOTIDE SEQUENCE [LARGE SCALE GENOMIC DNA]</scope>
    <source>
        <strain>TN</strain>
    </source>
</reference>
<accession>Q49640</accession>
<protein>
    <recommendedName>
        <fullName>Probable GTP pyrophosphokinase</fullName>
        <ecNumber>2.7.6.5</ecNumber>
    </recommendedName>
    <alternativeName>
        <fullName>(p)ppGpp synthase</fullName>
    </alternativeName>
    <alternativeName>
        <fullName>ATP:GTP 3'-pyrophosphotransferase</fullName>
    </alternativeName>
    <alternativeName>
        <fullName>ppGpp synthase I</fullName>
    </alternativeName>
</protein>
<organism>
    <name type="scientific">Mycobacterium leprae (strain TN)</name>
    <dbReference type="NCBI Taxonomy" id="272631"/>
    <lineage>
        <taxon>Bacteria</taxon>
        <taxon>Bacillati</taxon>
        <taxon>Actinomycetota</taxon>
        <taxon>Actinomycetes</taxon>
        <taxon>Mycobacteriales</taxon>
        <taxon>Mycobacteriaceae</taxon>
        <taxon>Mycobacterium</taxon>
    </lineage>
</organism>
<feature type="chain" id="PRO_0000166550" description="Probable GTP pyrophosphokinase">
    <location>
        <begin position="1"/>
        <end position="787"/>
    </location>
</feature>
<feature type="domain" description="HD" evidence="3">
    <location>
        <begin position="102"/>
        <end position="199"/>
    </location>
</feature>
<feature type="domain" description="TGS" evidence="4">
    <location>
        <begin position="447"/>
        <end position="508"/>
    </location>
</feature>
<feature type="domain" description="ACT" evidence="2">
    <location>
        <begin position="711"/>
        <end position="785"/>
    </location>
</feature>
<feature type="region of interest" description="Disordered" evidence="5">
    <location>
        <begin position="1"/>
        <end position="40"/>
    </location>
</feature>
<feature type="region of interest" description="Disordered" evidence="5">
    <location>
        <begin position="618"/>
        <end position="641"/>
    </location>
</feature>
<feature type="compositionally biased region" description="Polar residues" evidence="5">
    <location>
        <begin position="1"/>
        <end position="12"/>
    </location>
</feature>
<dbReference type="EC" id="2.7.6.5"/>
<dbReference type="EMBL" id="U00011">
    <property type="protein sequence ID" value="AAA17089.1"/>
    <property type="molecule type" value="Genomic_DNA"/>
</dbReference>
<dbReference type="EMBL" id="AL023591">
    <property type="protein sequence ID" value="CAA19084.1"/>
    <property type="molecule type" value="Genomic_DNA"/>
</dbReference>
<dbReference type="EMBL" id="AL583918">
    <property type="protein sequence ID" value="CAC29999.1"/>
    <property type="molecule type" value="Genomic_DNA"/>
</dbReference>
<dbReference type="PIR" id="S72725">
    <property type="entry name" value="S72725"/>
</dbReference>
<dbReference type="RefSeq" id="NP_301430.1">
    <property type="nucleotide sequence ID" value="NC_002677.1"/>
</dbReference>
<dbReference type="RefSeq" id="WP_010907754.1">
    <property type="nucleotide sequence ID" value="NC_002677.1"/>
</dbReference>
<dbReference type="SMR" id="Q49640"/>
<dbReference type="STRING" id="272631.gene:17574312"/>
<dbReference type="KEGG" id="mle:ML0491"/>
<dbReference type="PATRIC" id="fig|272631.5.peg.855"/>
<dbReference type="Leproma" id="ML0491"/>
<dbReference type="eggNOG" id="COG0317">
    <property type="taxonomic scope" value="Bacteria"/>
</dbReference>
<dbReference type="HOGENOM" id="CLU_012300_3_0_11"/>
<dbReference type="OrthoDB" id="9805041at2"/>
<dbReference type="UniPathway" id="UPA00908">
    <property type="reaction ID" value="UER00884"/>
</dbReference>
<dbReference type="Proteomes" id="UP000000806">
    <property type="component" value="Chromosome"/>
</dbReference>
<dbReference type="GO" id="GO:0005886">
    <property type="term" value="C:plasma membrane"/>
    <property type="evidence" value="ECO:0007669"/>
    <property type="project" value="TreeGrafter"/>
</dbReference>
<dbReference type="GO" id="GO:0005524">
    <property type="term" value="F:ATP binding"/>
    <property type="evidence" value="ECO:0007669"/>
    <property type="project" value="UniProtKB-KW"/>
</dbReference>
<dbReference type="GO" id="GO:0005525">
    <property type="term" value="F:GTP binding"/>
    <property type="evidence" value="ECO:0007669"/>
    <property type="project" value="UniProtKB-KW"/>
</dbReference>
<dbReference type="GO" id="GO:0008728">
    <property type="term" value="F:GTP diphosphokinase activity"/>
    <property type="evidence" value="ECO:0007669"/>
    <property type="project" value="UniProtKB-EC"/>
</dbReference>
<dbReference type="GO" id="GO:0016301">
    <property type="term" value="F:kinase activity"/>
    <property type="evidence" value="ECO:0007669"/>
    <property type="project" value="UniProtKB-KW"/>
</dbReference>
<dbReference type="GO" id="GO:0015970">
    <property type="term" value="P:guanosine tetraphosphate biosynthetic process"/>
    <property type="evidence" value="ECO:0007669"/>
    <property type="project" value="UniProtKB-UniPathway"/>
</dbReference>
<dbReference type="CDD" id="cd04876">
    <property type="entry name" value="ACT_RelA-SpoT"/>
    <property type="match status" value="1"/>
</dbReference>
<dbReference type="CDD" id="cd00077">
    <property type="entry name" value="HDc"/>
    <property type="match status" value="1"/>
</dbReference>
<dbReference type="CDD" id="cd05399">
    <property type="entry name" value="NT_Rel-Spo_like"/>
    <property type="match status" value="1"/>
</dbReference>
<dbReference type="CDD" id="cd01668">
    <property type="entry name" value="TGS_RSH"/>
    <property type="match status" value="1"/>
</dbReference>
<dbReference type="FunFam" id="3.10.20.30:FF:000002">
    <property type="entry name" value="GTP pyrophosphokinase (RelA/SpoT)"/>
    <property type="match status" value="1"/>
</dbReference>
<dbReference type="FunFam" id="1.10.3210.10:FF:000001">
    <property type="entry name" value="GTP pyrophosphokinase RelA"/>
    <property type="match status" value="1"/>
</dbReference>
<dbReference type="FunFam" id="3.30.460.10:FF:000001">
    <property type="entry name" value="GTP pyrophosphokinase RelA"/>
    <property type="match status" value="1"/>
</dbReference>
<dbReference type="Gene3D" id="3.10.20.30">
    <property type="match status" value="1"/>
</dbReference>
<dbReference type="Gene3D" id="3.30.70.260">
    <property type="match status" value="1"/>
</dbReference>
<dbReference type="Gene3D" id="3.30.460.10">
    <property type="entry name" value="Beta Polymerase, domain 2"/>
    <property type="match status" value="1"/>
</dbReference>
<dbReference type="Gene3D" id="1.10.3210.10">
    <property type="entry name" value="Hypothetical protein af1432"/>
    <property type="match status" value="1"/>
</dbReference>
<dbReference type="InterPro" id="IPR045865">
    <property type="entry name" value="ACT-like_dom_sf"/>
</dbReference>
<dbReference type="InterPro" id="IPR002912">
    <property type="entry name" value="ACT_dom"/>
</dbReference>
<dbReference type="InterPro" id="IPR012675">
    <property type="entry name" value="Beta-grasp_dom_sf"/>
</dbReference>
<dbReference type="InterPro" id="IPR003607">
    <property type="entry name" value="HD/PDEase_dom"/>
</dbReference>
<dbReference type="InterPro" id="IPR006674">
    <property type="entry name" value="HD_domain"/>
</dbReference>
<dbReference type="InterPro" id="IPR043519">
    <property type="entry name" value="NT_sf"/>
</dbReference>
<dbReference type="InterPro" id="IPR004811">
    <property type="entry name" value="RelA/Spo_fam"/>
</dbReference>
<dbReference type="InterPro" id="IPR045600">
    <property type="entry name" value="RelA/SpoT_AH_RIS"/>
</dbReference>
<dbReference type="InterPro" id="IPR007685">
    <property type="entry name" value="RelA_SpoT"/>
</dbReference>
<dbReference type="InterPro" id="IPR004095">
    <property type="entry name" value="TGS"/>
</dbReference>
<dbReference type="InterPro" id="IPR012676">
    <property type="entry name" value="TGS-like"/>
</dbReference>
<dbReference type="InterPro" id="IPR033655">
    <property type="entry name" value="TGS_RelA/SpoT"/>
</dbReference>
<dbReference type="NCBIfam" id="TIGR00691">
    <property type="entry name" value="spoT_relA"/>
    <property type="match status" value="1"/>
</dbReference>
<dbReference type="PANTHER" id="PTHR21262:SF31">
    <property type="entry name" value="GTP PYROPHOSPHOKINASE"/>
    <property type="match status" value="1"/>
</dbReference>
<dbReference type="PANTHER" id="PTHR21262">
    <property type="entry name" value="GUANOSINE-3',5'-BIS DIPHOSPHATE 3'-PYROPHOSPHOHYDROLASE"/>
    <property type="match status" value="1"/>
</dbReference>
<dbReference type="Pfam" id="PF13291">
    <property type="entry name" value="ACT_4"/>
    <property type="match status" value="1"/>
</dbReference>
<dbReference type="Pfam" id="PF13328">
    <property type="entry name" value="HD_4"/>
    <property type="match status" value="1"/>
</dbReference>
<dbReference type="Pfam" id="PF19296">
    <property type="entry name" value="RelA_AH_RIS"/>
    <property type="match status" value="1"/>
</dbReference>
<dbReference type="Pfam" id="PF04607">
    <property type="entry name" value="RelA_SpoT"/>
    <property type="match status" value="1"/>
</dbReference>
<dbReference type="Pfam" id="PF02824">
    <property type="entry name" value="TGS"/>
    <property type="match status" value="1"/>
</dbReference>
<dbReference type="SMART" id="SM00471">
    <property type="entry name" value="HDc"/>
    <property type="match status" value="1"/>
</dbReference>
<dbReference type="SMART" id="SM00954">
    <property type="entry name" value="RelA_SpoT"/>
    <property type="match status" value="1"/>
</dbReference>
<dbReference type="SUPFAM" id="SSF55021">
    <property type="entry name" value="ACT-like"/>
    <property type="match status" value="1"/>
</dbReference>
<dbReference type="SUPFAM" id="SSF109604">
    <property type="entry name" value="HD-domain/PDEase-like"/>
    <property type="match status" value="1"/>
</dbReference>
<dbReference type="SUPFAM" id="SSF81301">
    <property type="entry name" value="Nucleotidyltransferase"/>
    <property type="match status" value="1"/>
</dbReference>
<dbReference type="SUPFAM" id="SSF81271">
    <property type="entry name" value="TGS-like"/>
    <property type="match status" value="1"/>
</dbReference>
<dbReference type="PROSITE" id="PS51671">
    <property type="entry name" value="ACT"/>
    <property type="match status" value="1"/>
</dbReference>
<dbReference type="PROSITE" id="PS51831">
    <property type="entry name" value="HD"/>
    <property type="match status" value="1"/>
</dbReference>
<dbReference type="PROSITE" id="PS51880">
    <property type="entry name" value="TGS"/>
    <property type="match status" value="1"/>
</dbReference>
<keyword id="KW-0067">ATP-binding</keyword>
<keyword id="KW-0342">GTP-binding</keyword>
<keyword id="KW-0418">Kinase</keyword>
<keyword id="KW-0547">Nucleotide-binding</keyword>
<keyword id="KW-1185">Reference proteome</keyword>
<keyword id="KW-0808">Transferase</keyword>